<gene>
    <name evidence="1" type="primary">gltX2</name>
    <name type="ordered locus">GbCGDNIH1_1416</name>
</gene>
<accession>Q0BS88</accession>
<comment type="function">
    <text evidence="1">Catalyzes the attachment of glutamate to tRNA(Glu) in a two-step reaction: glutamate is first activated by ATP to form Glu-AMP and then transferred to the acceptor end of tRNA(Glu).</text>
</comment>
<comment type="catalytic activity">
    <reaction evidence="1">
        <text>tRNA(Glu) + L-glutamate + ATP = L-glutamyl-tRNA(Glu) + AMP + diphosphate</text>
        <dbReference type="Rhea" id="RHEA:23540"/>
        <dbReference type="Rhea" id="RHEA-COMP:9663"/>
        <dbReference type="Rhea" id="RHEA-COMP:9680"/>
        <dbReference type="ChEBI" id="CHEBI:29985"/>
        <dbReference type="ChEBI" id="CHEBI:30616"/>
        <dbReference type="ChEBI" id="CHEBI:33019"/>
        <dbReference type="ChEBI" id="CHEBI:78442"/>
        <dbReference type="ChEBI" id="CHEBI:78520"/>
        <dbReference type="ChEBI" id="CHEBI:456215"/>
        <dbReference type="EC" id="6.1.1.17"/>
    </reaction>
</comment>
<comment type="subunit">
    <text evidence="1">Monomer.</text>
</comment>
<comment type="subcellular location">
    <subcellularLocation>
        <location evidence="1">Cytoplasm</location>
    </subcellularLocation>
</comment>
<comment type="similarity">
    <text evidence="1">Belongs to the class-I aminoacyl-tRNA synthetase family. Glutamate--tRNA ligase type 1 subfamily.</text>
</comment>
<feature type="chain" id="PRO_0000367677" description="Glutamate--tRNA ligase 2">
    <location>
        <begin position="1"/>
        <end position="447"/>
    </location>
</feature>
<feature type="short sequence motif" description="'HIGH' region" evidence="1">
    <location>
        <begin position="8"/>
        <end position="18"/>
    </location>
</feature>
<feature type="short sequence motif" description="'KMSKS' region" evidence="1">
    <location>
        <begin position="239"/>
        <end position="243"/>
    </location>
</feature>
<feature type="binding site" evidence="1">
    <location>
        <position position="242"/>
    </location>
    <ligand>
        <name>ATP</name>
        <dbReference type="ChEBI" id="CHEBI:30616"/>
    </ligand>
</feature>
<proteinExistence type="inferred from homology"/>
<organism>
    <name type="scientific">Granulibacter bethesdensis (strain ATCC BAA-1260 / CGDNIH1)</name>
    <dbReference type="NCBI Taxonomy" id="391165"/>
    <lineage>
        <taxon>Bacteria</taxon>
        <taxon>Pseudomonadati</taxon>
        <taxon>Pseudomonadota</taxon>
        <taxon>Alphaproteobacteria</taxon>
        <taxon>Acetobacterales</taxon>
        <taxon>Acetobacteraceae</taxon>
        <taxon>Granulibacter</taxon>
    </lineage>
</organism>
<reference key="1">
    <citation type="journal article" date="2007" name="J. Bacteriol.">
        <title>Genome sequence analysis of the emerging human pathogenic acetic acid bacterium Granulibacter bethesdensis.</title>
        <authorList>
            <person name="Greenberg D.E."/>
            <person name="Porcella S.F."/>
            <person name="Zelazny A.M."/>
            <person name="Virtaneva K."/>
            <person name="Sturdevant D.E."/>
            <person name="Kupko J.J. III"/>
            <person name="Barbian K.D."/>
            <person name="Babar A."/>
            <person name="Dorward D.W."/>
            <person name="Holland S.M."/>
        </authorList>
    </citation>
    <scope>NUCLEOTIDE SEQUENCE [LARGE SCALE GENOMIC DNA]</scope>
    <source>
        <strain>ATCC BAA-1260 / CGDNIH1</strain>
    </source>
</reference>
<keyword id="KW-0030">Aminoacyl-tRNA synthetase</keyword>
<keyword id="KW-0067">ATP-binding</keyword>
<keyword id="KW-0963">Cytoplasm</keyword>
<keyword id="KW-0436">Ligase</keyword>
<keyword id="KW-0547">Nucleotide-binding</keyword>
<keyword id="KW-0648">Protein biosynthesis</keyword>
<keyword id="KW-1185">Reference proteome</keyword>
<name>SYE2_GRABC</name>
<dbReference type="EC" id="6.1.1.17" evidence="1"/>
<dbReference type="EMBL" id="CP000394">
    <property type="protein sequence ID" value="ABI62314.1"/>
    <property type="molecule type" value="Genomic_DNA"/>
</dbReference>
<dbReference type="RefSeq" id="WP_011632118.1">
    <property type="nucleotide sequence ID" value="NC_008343.2"/>
</dbReference>
<dbReference type="SMR" id="Q0BS88"/>
<dbReference type="STRING" id="391165.GbCGDNIH1_1416"/>
<dbReference type="KEGG" id="gbe:GbCGDNIH1_1416"/>
<dbReference type="eggNOG" id="COG0008">
    <property type="taxonomic scope" value="Bacteria"/>
</dbReference>
<dbReference type="eggNOG" id="COG1384">
    <property type="taxonomic scope" value="Bacteria"/>
</dbReference>
<dbReference type="HOGENOM" id="CLU_015768_6_1_5"/>
<dbReference type="Proteomes" id="UP000001963">
    <property type="component" value="Chromosome"/>
</dbReference>
<dbReference type="GO" id="GO:0005737">
    <property type="term" value="C:cytoplasm"/>
    <property type="evidence" value="ECO:0007669"/>
    <property type="project" value="UniProtKB-SubCell"/>
</dbReference>
<dbReference type="GO" id="GO:0005524">
    <property type="term" value="F:ATP binding"/>
    <property type="evidence" value="ECO:0007669"/>
    <property type="project" value="UniProtKB-UniRule"/>
</dbReference>
<dbReference type="GO" id="GO:0004818">
    <property type="term" value="F:glutamate-tRNA ligase activity"/>
    <property type="evidence" value="ECO:0007669"/>
    <property type="project" value="UniProtKB-UniRule"/>
</dbReference>
<dbReference type="GO" id="GO:0000049">
    <property type="term" value="F:tRNA binding"/>
    <property type="evidence" value="ECO:0007669"/>
    <property type="project" value="InterPro"/>
</dbReference>
<dbReference type="GO" id="GO:0006424">
    <property type="term" value="P:glutamyl-tRNA aminoacylation"/>
    <property type="evidence" value="ECO:0007669"/>
    <property type="project" value="UniProtKB-UniRule"/>
</dbReference>
<dbReference type="Gene3D" id="1.10.10.350">
    <property type="match status" value="1"/>
</dbReference>
<dbReference type="Gene3D" id="3.40.50.620">
    <property type="entry name" value="HUPs"/>
    <property type="match status" value="1"/>
</dbReference>
<dbReference type="HAMAP" id="MF_00022">
    <property type="entry name" value="Glu_tRNA_synth_type1"/>
    <property type="match status" value="1"/>
</dbReference>
<dbReference type="InterPro" id="IPR045462">
    <property type="entry name" value="aa-tRNA-synth_I_cd-bd"/>
</dbReference>
<dbReference type="InterPro" id="IPR020751">
    <property type="entry name" value="aa-tRNA-synth_I_codon-bd_sub2"/>
</dbReference>
<dbReference type="InterPro" id="IPR001412">
    <property type="entry name" value="aa-tRNA-synth_I_CS"/>
</dbReference>
<dbReference type="InterPro" id="IPR008925">
    <property type="entry name" value="aa_tRNA-synth_I_cd-bd_sf"/>
</dbReference>
<dbReference type="InterPro" id="IPR004527">
    <property type="entry name" value="Glu-tRNA-ligase_bac/mito"/>
</dbReference>
<dbReference type="InterPro" id="IPR000924">
    <property type="entry name" value="Glu/Gln-tRNA-synth"/>
</dbReference>
<dbReference type="InterPro" id="IPR020058">
    <property type="entry name" value="Glu/Gln-tRNA-synth_Ib_cat-dom"/>
</dbReference>
<dbReference type="InterPro" id="IPR049940">
    <property type="entry name" value="GluQ/Sye"/>
</dbReference>
<dbReference type="InterPro" id="IPR014729">
    <property type="entry name" value="Rossmann-like_a/b/a_fold"/>
</dbReference>
<dbReference type="NCBIfam" id="TIGR00464">
    <property type="entry name" value="gltX_bact"/>
    <property type="match status" value="1"/>
</dbReference>
<dbReference type="PANTHER" id="PTHR43311">
    <property type="entry name" value="GLUTAMATE--TRNA LIGASE"/>
    <property type="match status" value="1"/>
</dbReference>
<dbReference type="PANTHER" id="PTHR43311:SF2">
    <property type="entry name" value="GLUTAMATE--TRNA LIGASE, MITOCHONDRIAL-RELATED"/>
    <property type="match status" value="1"/>
</dbReference>
<dbReference type="Pfam" id="PF19269">
    <property type="entry name" value="Anticodon_2"/>
    <property type="match status" value="1"/>
</dbReference>
<dbReference type="Pfam" id="PF00749">
    <property type="entry name" value="tRNA-synt_1c"/>
    <property type="match status" value="1"/>
</dbReference>
<dbReference type="PRINTS" id="PR00987">
    <property type="entry name" value="TRNASYNTHGLU"/>
</dbReference>
<dbReference type="SUPFAM" id="SSF48163">
    <property type="entry name" value="An anticodon-binding domain of class I aminoacyl-tRNA synthetases"/>
    <property type="match status" value="1"/>
</dbReference>
<dbReference type="SUPFAM" id="SSF52374">
    <property type="entry name" value="Nucleotidylyl transferase"/>
    <property type="match status" value="1"/>
</dbReference>
<dbReference type="PROSITE" id="PS00178">
    <property type="entry name" value="AA_TRNA_LIGASE_I"/>
    <property type="match status" value="1"/>
</dbReference>
<evidence type="ECO:0000255" key="1">
    <source>
        <dbReference type="HAMAP-Rule" id="MF_00022"/>
    </source>
</evidence>
<protein>
    <recommendedName>
        <fullName evidence="1">Glutamate--tRNA ligase 2</fullName>
        <ecNumber evidence="1">6.1.1.17</ecNumber>
    </recommendedName>
    <alternativeName>
        <fullName evidence="1">Glutamyl-tRNA synthetase 2</fullName>
        <shortName evidence="1">GluRS 2</shortName>
    </alternativeName>
</protein>
<sequence>MVHVRFAPSPTGYLHVGNARIAVANALFALRYSGKFTLRLDDTDLERSRDEYAEAIAQDLRWMGIEWADTFRQRDNMDRYEAAADALKASGRLYPCFESEEELRYKRELRLKQGRAPVYDRAMLKMTPEQRAQAEANGKRPYWRFLLSDRTVGWRDGVLGPRQVKLQAISDPVVIRADGTPLYTFTSVVDDIATGVTHIIRGEDHISNSGVQTDLFEALGKVAPALAHLPLLMDADGGKLSKRIDSLTLRSLARDGIEPVALVSYLARLGSSRDPQPLTLAELAQEFDLDAFSASSARFDGSQLAALNRRTLQTMPFSAVQDRLPQGATEAFWEAVRGNLDMLAEARLWWDVVAGSIVPPVLTDEDNALLKQALPLLPQEPWDTTTWSVWTRAVKEASDRSGRALFRPLRLALTGEEHGPELAALLPLMGAERVRTRLTLTSGAMAG</sequence>